<evidence type="ECO:0000250" key="1">
    <source>
        <dbReference type="UniProtKB" id="Q17435"/>
    </source>
</evidence>
<evidence type="ECO:0000250" key="2">
    <source>
        <dbReference type="UniProtKB" id="Q9NQP4"/>
    </source>
</evidence>
<evidence type="ECO:0000255" key="3"/>
<evidence type="ECO:0000312" key="4">
    <source>
        <dbReference type="EMBL" id="CAP26301.1"/>
    </source>
</evidence>
<protein>
    <recommendedName>
        <fullName evidence="1">Probable prefoldin subunit 4</fullName>
    </recommendedName>
</protein>
<comment type="function">
    <text evidence="1 2">Binds specifically to cytosolic chaperonin (c-CPN) and transfers target proteins to it. Binds to nascent polypeptide chain and promotes folding in an environment in which there are many competing pathways for nonnative proteins. Appears to play a non-essential role (By similarity).</text>
</comment>
<comment type="subunit">
    <text evidence="2">Heterohexamer of two PFD-alpha type and four PFD-beta type subunits.</text>
</comment>
<comment type="similarity">
    <text evidence="3">Belongs to the prefoldin subunit beta family.</text>
</comment>
<keyword id="KW-0143">Chaperone</keyword>
<keyword id="KW-1185">Reference proteome</keyword>
<organism>
    <name type="scientific">Caenorhabditis briggsae</name>
    <dbReference type="NCBI Taxonomy" id="6238"/>
    <lineage>
        <taxon>Eukaryota</taxon>
        <taxon>Metazoa</taxon>
        <taxon>Ecdysozoa</taxon>
        <taxon>Nematoda</taxon>
        <taxon>Chromadorea</taxon>
        <taxon>Rhabditida</taxon>
        <taxon>Rhabditina</taxon>
        <taxon>Rhabditomorpha</taxon>
        <taxon>Rhabditoidea</taxon>
        <taxon>Rhabditidae</taxon>
        <taxon>Peloderinae</taxon>
        <taxon>Caenorhabditis</taxon>
    </lineage>
</organism>
<proteinExistence type="inferred from homology"/>
<sequence>MATQAKVSAEDQALLNKFARSYQLQTQLKAECKEMKTLVENINEATDEVLLLDDEDSASIPCRIGSCFVHFNSDSLNEHLEAKKASTETVLAEKTNELETITAEMERIKKVLYGKFGDQINLDAEE</sequence>
<dbReference type="EMBL" id="HE600986">
    <property type="protein sequence ID" value="CAP26301.1"/>
    <property type="molecule type" value="Genomic_DNA"/>
</dbReference>
<dbReference type="SMR" id="A8X0Z1"/>
<dbReference type="FunCoup" id="A8X0Z1">
    <property type="interactions" value="2482"/>
</dbReference>
<dbReference type="STRING" id="6238.A8X0Z1"/>
<dbReference type="EnsemblMetazoa" id="CBG06071.1">
    <property type="protein sequence ID" value="CBG06071.1"/>
    <property type="gene ID" value="WBGene00028407"/>
</dbReference>
<dbReference type="KEGG" id="cbr:CBG_06071"/>
<dbReference type="CTD" id="8575329"/>
<dbReference type="WormBase" id="CBG06071">
    <property type="protein sequence ID" value="CBP07222"/>
    <property type="gene ID" value="WBGene00028407"/>
    <property type="gene designation" value="Cbr-pfd-4"/>
</dbReference>
<dbReference type="eggNOG" id="KOG1760">
    <property type="taxonomic scope" value="Eukaryota"/>
</dbReference>
<dbReference type="HOGENOM" id="CLU_130032_0_0_1"/>
<dbReference type="InParanoid" id="A8X0Z1"/>
<dbReference type="OMA" id="KFGRAIN"/>
<dbReference type="Proteomes" id="UP000008549">
    <property type="component" value="Unassembled WGS sequence"/>
</dbReference>
<dbReference type="GO" id="GO:0005737">
    <property type="term" value="C:cytoplasm"/>
    <property type="evidence" value="ECO:0000318"/>
    <property type="project" value="GO_Central"/>
</dbReference>
<dbReference type="GO" id="GO:0016272">
    <property type="term" value="C:prefoldin complex"/>
    <property type="evidence" value="ECO:0000318"/>
    <property type="project" value="GO_Central"/>
</dbReference>
<dbReference type="GO" id="GO:0051082">
    <property type="term" value="F:unfolded protein binding"/>
    <property type="evidence" value="ECO:0000318"/>
    <property type="project" value="GO_Central"/>
</dbReference>
<dbReference type="GO" id="GO:0006457">
    <property type="term" value="P:protein folding"/>
    <property type="evidence" value="ECO:0000318"/>
    <property type="project" value="GO_Central"/>
</dbReference>
<dbReference type="CDD" id="cd23165">
    <property type="entry name" value="Prefoldin_4"/>
    <property type="match status" value="1"/>
</dbReference>
<dbReference type="InterPro" id="IPR002777">
    <property type="entry name" value="PFD_beta-like"/>
</dbReference>
<dbReference type="InterPro" id="IPR016661">
    <property type="entry name" value="PFDN4"/>
</dbReference>
<dbReference type="PANTHER" id="PTHR21100">
    <property type="entry name" value="PREFOLDIN SUBUNIT 4"/>
    <property type="match status" value="1"/>
</dbReference>
<dbReference type="PANTHER" id="PTHR21100:SF9">
    <property type="entry name" value="PREFOLDIN SUBUNIT 4"/>
    <property type="match status" value="1"/>
</dbReference>
<dbReference type="Pfam" id="PF01920">
    <property type="entry name" value="Prefoldin_2"/>
    <property type="match status" value="1"/>
</dbReference>
<dbReference type="PIRSF" id="PIRSF016477">
    <property type="entry name" value="Prefoldin_subunit_4"/>
    <property type="match status" value="1"/>
</dbReference>
<dbReference type="SUPFAM" id="SSF46579">
    <property type="entry name" value="Prefoldin"/>
    <property type="match status" value="1"/>
</dbReference>
<name>PFD4_CAEBR</name>
<feature type="chain" id="PRO_0000351208" description="Probable prefoldin subunit 4">
    <location>
        <begin position="1"/>
        <end position="126"/>
    </location>
</feature>
<accession>A8X0Z1</accession>
<reference evidence="4" key="1">
    <citation type="journal article" date="2003" name="PLoS Biol.">
        <title>The genome sequence of Caenorhabditis briggsae: a platform for comparative genomics.</title>
        <authorList>
            <person name="Stein L.D."/>
            <person name="Bao Z."/>
            <person name="Blasiar D."/>
            <person name="Blumenthal T."/>
            <person name="Brent M.R."/>
            <person name="Chen N."/>
            <person name="Chinwalla A."/>
            <person name="Clarke L."/>
            <person name="Clee C."/>
            <person name="Coghlan A."/>
            <person name="Coulson A."/>
            <person name="D'Eustachio P."/>
            <person name="Fitch D.H.A."/>
            <person name="Fulton L.A."/>
            <person name="Fulton R.E."/>
            <person name="Griffiths-Jones S."/>
            <person name="Harris T.W."/>
            <person name="Hillier L.W."/>
            <person name="Kamath R."/>
            <person name="Kuwabara P.E."/>
            <person name="Mardis E.R."/>
            <person name="Marra M.A."/>
            <person name="Miner T.L."/>
            <person name="Minx P."/>
            <person name="Mullikin J.C."/>
            <person name="Plumb R.W."/>
            <person name="Rogers J."/>
            <person name="Schein J.E."/>
            <person name="Sohrmann M."/>
            <person name="Spieth J."/>
            <person name="Stajich J.E."/>
            <person name="Wei C."/>
            <person name="Willey D."/>
            <person name="Wilson R.K."/>
            <person name="Durbin R.M."/>
            <person name="Waterston R.H."/>
        </authorList>
    </citation>
    <scope>NUCLEOTIDE SEQUENCE [LARGE SCALE GENOMIC DNA]</scope>
    <source>
        <strain evidence="4">AF16</strain>
    </source>
</reference>
<gene>
    <name evidence="4" type="primary">pfd-4</name>
    <name type="synonym">tag-317</name>
    <name type="ORF">CBG06071</name>
</gene>